<proteinExistence type="evidence at protein level"/>
<protein>
    <recommendedName>
        <fullName evidence="15">Phospholemman</fullName>
    </recommendedName>
    <alternativeName>
        <fullName evidence="1">FXYD domain-containing ion transport regulator 1</fullName>
    </alternativeName>
    <alternativeName>
        <fullName evidence="16">Sodium/potassium-transporting ATPase subunit FXYD1</fullName>
    </alternativeName>
</protein>
<keyword id="KW-1003">Cell membrane</keyword>
<keyword id="KW-0903">Direct protein sequencing</keyword>
<keyword id="KW-0318">Glutathionylation</keyword>
<keyword id="KW-0406">Ion transport</keyword>
<keyword id="KW-0449">Lipoprotein</keyword>
<keyword id="KW-0472">Membrane</keyword>
<keyword id="KW-0564">Palmitate</keyword>
<keyword id="KW-0597">Phosphoprotein</keyword>
<keyword id="KW-0630">Potassium</keyword>
<keyword id="KW-0633">Potassium transport</keyword>
<keyword id="KW-1185">Reference proteome</keyword>
<keyword id="KW-0732">Signal</keyword>
<keyword id="KW-0915">Sodium</keyword>
<keyword id="KW-0739">Sodium transport</keyword>
<keyword id="KW-0740">Sodium/potassium transport</keyword>
<keyword id="KW-0812">Transmembrane</keyword>
<keyword id="KW-1133">Transmembrane helix</keyword>
<keyword id="KW-0813">Transport</keyword>
<gene>
    <name evidence="1" type="primary">FXYD1</name>
    <name evidence="1" type="synonym">PLM</name>
</gene>
<evidence type="ECO:0000250" key="1">
    <source>
        <dbReference type="UniProtKB" id="O00168"/>
    </source>
</evidence>
<evidence type="ECO:0000250" key="2">
    <source>
        <dbReference type="UniProtKB" id="O08589"/>
    </source>
</evidence>
<evidence type="ECO:0000250" key="3">
    <source>
        <dbReference type="UniProtKB" id="Q3SZX0"/>
    </source>
</evidence>
<evidence type="ECO:0000250" key="4">
    <source>
        <dbReference type="UniProtKB" id="Q9Z239"/>
    </source>
</evidence>
<evidence type="ECO:0000255" key="5"/>
<evidence type="ECO:0000256" key="6">
    <source>
        <dbReference type="SAM" id="MobiDB-lite"/>
    </source>
</evidence>
<evidence type="ECO:0000269" key="7">
    <source>
    </source>
</evidence>
<evidence type="ECO:0000269" key="8">
    <source>
    </source>
</evidence>
<evidence type="ECO:0000269" key="9">
    <source>
    </source>
</evidence>
<evidence type="ECO:0000269" key="10">
    <source>
    </source>
</evidence>
<evidence type="ECO:0000269" key="11">
    <source>
    </source>
</evidence>
<evidence type="ECO:0000269" key="12">
    <source>
    </source>
</evidence>
<evidence type="ECO:0000269" key="13">
    <source>
    </source>
</evidence>
<evidence type="ECO:0000269" key="14">
    <source>
    </source>
</evidence>
<evidence type="ECO:0000303" key="15">
    <source>
    </source>
</evidence>
<evidence type="ECO:0000305" key="16"/>
<feature type="signal peptide" evidence="9">
    <location>
        <begin position="1"/>
        <end position="20"/>
    </location>
</feature>
<feature type="chain" id="PRO_0000010358" description="Phospholemman">
    <location>
        <begin position="21"/>
        <end position="92"/>
    </location>
</feature>
<feature type="topological domain" description="Extracellular" evidence="5">
    <location>
        <begin position="21"/>
        <end position="35"/>
    </location>
</feature>
<feature type="transmembrane region" description="Helical" evidence="5">
    <location>
        <begin position="36"/>
        <end position="56"/>
    </location>
</feature>
<feature type="topological domain" description="Cytoplasmic" evidence="5">
    <location>
        <begin position="57"/>
        <end position="92"/>
    </location>
</feature>
<feature type="region of interest" description="Disordered" evidence="6">
    <location>
        <begin position="65"/>
        <end position="92"/>
    </location>
</feature>
<feature type="compositionally biased region" description="Basic residues" evidence="6">
    <location>
        <begin position="83"/>
        <end position="92"/>
    </location>
</feature>
<feature type="modified residue" description="S-glutathionyl cysteine; alternate" evidence="13">
    <location>
        <position position="62"/>
    </location>
</feature>
<feature type="modified residue" description="Phosphothreonine" evidence="4">
    <location>
        <position position="79"/>
    </location>
</feature>
<feature type="modified residue" description="Phosphoserine" evidence="4">
    <location>
        <position position="82"/>
    </location>
</feature>
<feature type="modified residue" description="Phosphoserine; by PKA and PKC" evidence="8 10 12">
    <location>
        <position position="83"/>
    </location>
</feature>
<feature type="modified residue" description="Phosphoserine; by PKA and PKC" evidence="8 10 12">
    <location>
        <position position="88"/>
    </location>
</feature>
<feature type="modified residue" description="Phosphothreonine; by PKC" evidence="10">
    <location>
        <position position="89"/>
    </location>
</feature>
<feature type="lipid moiety-binding region" description="S-palmitoyl cysteine" evidence="1">
    <location>
        <position position="60"/>
    </location>
</feature>
<feature type="lipid moiety-binding region" description="S-palmitoyl cysteine; alternate" evidence="1">
    <location>
        <position position="62"/>
    </location>
</feature>
<feature type="mutagenesis site" description="Does not affect glutathionylation." evidence="13">
    <original>C</original>
    <variation>A</variation>
    <location>
        <position position="60"/>
    </location>
</feature>
<feature type="mutagenesis site" description="Loss of glutathionylation and loss of ability to reduce glutathionylation of ATP1B1." evidence="13">
    <original>C</original>
    <variation>A</variation>
    <location>
        <position position="62"/>
    </location>
</feature>
<feature type="mutagenesis site" description="Loss of glutathionylation and loss of ability to reduce glutathionylation of ATP1B1." evidence="13">
    <original>K</original>
    <variation>G</variation>
    <location>
        <position position="63"/>
    </location>
</feature>
<feature type="mutagenesis site" description="Loss of phosphorylation. Decreased affinity of the sodium/potassium-transporting ATPase for Na(+)." evidence="10 11">
    <original>S</original>
    <variation>A</variation>
    <location>
        <position position="83"/>
    </location>
</feature>
<feature type="mutagenesis site" description="Phosphomimetic mutant which reduces binding to ATP1A1 and increases FXYD1 oligomerization." evidence="12">
    <original>S</original>
    <variation>E</variation>
    <location>
        <position position="83"/>
    </location>
</feature>
<feature type="mutagenesis site" description="Loss of phosphorylation. Decreased affinity of the sodium/potassium-transporting ATPase for Na(+)." evidence="10 11">
    <original>S</original>
    <variation>A</variation>
    <location>
        <position position="88"/>
    </location>
</feature>
<feature type="mutagenesis site" description="Phosphomimetic mutant which reduces binding to ATP1A1 and increases FXYD1 oligomerization." evidence="12">
    <original>S</original>
    <variation>E</variation>
    <location>
        <position position="88"/>
    </location>
</feature>
<feature type="mutagenesis site" description="Loss of phosphorylation." evidence="10">
    <original>T</original>
    <variation>A</variation>
    <location>
        <position position="89"/>
    </location>
</feature>
<dbReference type="EMBL" id="M63934">
    <property type="status" value="NOT_ANNOTATED_CDS"/>
    <property type="molecule type" value="mRNA"/>
</dbReference>
<dbReference type="PIR" id="A40533">
    <property type="entry name" value="A40533"/>
</dbReference>
<dbReference type="SMR" id="P56513"/>
<dbReference type="FunCoup" id="P56513">
    <property type="interactions" value="1"/>
</dbReference>
<dbReference type="STRING" id="9615.ENSCAFP00000060996"/>
<dbReference type="TCDB" id="1.A.27.1.1">
    <property type="family name" value="the phospholemman (plm) family"/>
</dbReference>
<dbReference type="iPTMnet" id="P56513"/>
<dbReference type="SwissPalm" id="P56513"/>
<dbReference type="PaxDb" id="9612-ENSCAFP00000010530"/>
<dbReference type="eggNOG" id="ENOG502S5XM">
    <property type="taxonomic scope" value="Eukaryota"/>
</dbReference>
<dbReference type="InParanoid" id="P56513"/>
<dbReference type="OrthoDB" id="8430468at2759"/>
<dbReference type="Proteomes" id="UP000002254">
    <property type="component" value="Unplaced"/>
</dbReference>
<dbReference type="Proteomes" id="UP000694429">
    <property type="component" value="Unplaced"/>
</dbReference>
<dbReference type="Proteomes" id="UP000694542">
    <property type="component" value="Unplaced"/>
</dbReference>
<dbReference type="Proteomes" id="UP000805418">
    <property type="component" value="Unplaced"/>
</dbReference>
<dbReference type="GO" id="GO:0016324">
    <property type="term" value="C:apical plasma membrane"/>
    <property type="evidence" value="ECO:0000250"/>
    <property type="project" value="UniProtKB"/>
</dbReference>
<dbReference type="GO" id="GO:0005901">
    <property type="term" value="C:caveola"/>
    <property type="evidence" value="ECO:0000250"/>
    <property type="project" value="UniProtKB"/>
</dbReference>
<dbReference type="GO" id="GO:0014704">
    <property type="term" value="C:intercalated disc"/>
    <property type="evidence" value="ECO:0000250"/>
    <property type="project" value="UniProtKB"/>
</dbReference>
<dbReference type="GO" id="GO:0042383">
    <property type="term" value="C:sarcolemma"/>
    <property type="evidence" value="ECO:0000314"/>
    <property type="project" value="UniProtKB"/>
</dbReference>
<dbReference type="GO" id="GO:0005890">
    <property type="term" value="C:sodium:potassium-exchanging ATPase complex"/>
    <property type="evidence" value="ECO:0000250"/>
    <property type="project" value="UniProtKB"/>
</dbReference>
<dbReference type="GO" id="GO:0030315">
    <property type="term" value="C:T-tubule"/>
    <property type="evidence" value="ECO:0000250"/>
    <property type="project" value="UniProtKB"/>
</dbReference>
<dbReference type="GO" id="GO:0017080">
    <property type="term" value="F:sodium channel regulator activity"/>
    <property type="evidence" value="ECO:0000314"/>
    <property type="project" value="UniProtKB"/>
</dbReference>
<dbReference type="GO" id="GO:0010734">
    <property type="term" value="P:negative regulation of protein glutathionylation"/>
    <property type="evidence" value="ECO:0000314"/>
    <property type="project" value="UniProtKB"/>
</dbReference>
<dbReference type="GO" id="GO:1903278">
    <property type="term" value="P:positive regulation of sodium ion export across plasma membrane"/>
    <property type="evidence" value="ECO:0000250"/>
    <property type="project" value="UniProtKB"/>
</dbReference>
<dbReference type="GO" id="GO:0006813">
    <property type="term" value="P:potassium ion transport"/>
    <property type="evidence" value="ECO:0007669"/>
    <property type="project" value="UniProtKB-KW"/>
</dbReference>
<dbReference type="GO" id="GO:1903406">
    <property type="term" value="P:regulation of P-type sodium:potassium-exchanging transporter activity"/>
    <property type="evidence" value="ECO:0000314"/>
    <property type="project" value="UniProtKB"/>
</dbReference>
<dbReference type="GO" id="GO:0006814">
    <property type="term" value="P:sodium ion transport"/>
    <property type="evidence" value="ECO:0007669"/>
    <property type="project" value="UniProtKB-KW"/>
</dbReference>
<dbReference type="CDD" id="cd20317">
    <property type="entry name" value="FXYD1"/>
    <property type="match status" value="1"/>
</dbReference>
<dbReference type="FunFam" id="1.20.5.780:FF:000002">
    <property type="entry name" value="FXYD domain-containing ion transport regulator"/>
    <property type="match status" value="1"/>
</dbReference>
<dbReference type="Gene3D" id="1.20.5.780">
    <property type="entry name" value="Single helix bin"/>
    <property type="match status" value="1"/>
</dbReference>
<dbReference type="InterPro" id="IPR047297">
    <property type="entry name" value="FXYD_motif"/>
</dbReference>
<dbReference type="InterPro" id="IPR000272">
    <property type="entry name" value="Ion-transport_regulator_FXYD"/>
</dbReference>
<dbReference type="InterPro" id="IPR047281">
    <property type="entry name" value="PLM"/>
</dbReference>
<dbReference type="PANTHER" id="PTHR14132:SF12">
    <property type="entry name" value="PHOSPHOLEMMAN"/>
    <property type="match status" value="1"/>
</dbReference>
<dbReference type="PANTHER" id="PTHR14132">
    <property type="entry name" value="SODIUM/POTASSIUM-TRANSPORTING ATPASE SUBUNIT GAMMA"/>
    <property type="match status" value="1"/>
</dbReference>
<dbReference type="Pfam" id="PF02038">
    <property type="entry name" value="ATP1G1_PLM_MAT8"/>
    <property type="match status" value="1"/>
</dbReference>
<dbReference type="PROSITE" id="PS01310">
    <property type="entry name" value="FXYD"/>
    <property type="match status" value="1"/>
</dbReference>
<organism>
    <name type="scientific">Canis lupus familiaris</name>
    <name type="common">Dog</name>
    <name type="synonym">Canis familiaris</name>
    <dbReference type="NCBI Taxonomy" id="9615"/>
    <lineage>
        <taxon>Eukaryota</taxon>
        <taxon>Metazoa</taxon>
        <taxon>Chordata</taxon>
        <taxon>Craniata</taxon>
        <taxon>Vertebrata</taxon>
        <taxon>Euteleostomi</taxon>
        <taxon>Mammalia</taxon>
        <taxon>Eutheria</taxon>
        <taxon>Laurasiatheria</taxon>
        <taxon>Carnivora</taxon>
        <taxon>Caniformia</taxon>
        <taxon>Canidae</taxon>
        <taxon>Canis</taxon>
    </lineage>
</organism>
<reference key="1">
    <citation type="journal article" date="1991" name="J. Biol. Chem.">
        <title>Purification and complete sequence determination of the major plasma membrane substrate for cAMP-dependent protein kinase and protein kinase C in myocardium.</title>
        <authorList>
            <person name="Palmer C.J."/>
            <person name="Scott B.T."/>
            <person name="Jones L.R."/>
        </authorList>
    </citation>
    <scope>NUCLEOTIDE SEQUENCE [MRNA]</scope>
    <scope>PROTEIN SEQUENCE OF 21-92</scope>
    <scope>SUBCELLULAR LOCATION</scope>
    <scope>TISSUE SPECIFICITY</scope>
    <scope>PHOSPHORYLATION</scope>
    <source>
        <tissue>Heart ventricle</tissue>
    </source>
</reference>
<reference key="2">
    <citation type="journal article" date="1998" name="Circ. Res.">
        <title>Structural domains in phospholemman: a possible role for the carboxyl terminus in channel inactivation.</title>
        <authorList>
            <person name="Chen Z."/>
            <person name="Jones L.R."/>
            <person name="O'Brian J.J."/>
            <person name="Moorman J.R."/>
            <person name="Cala S.E."/>
        </authorList>
    </citation>
    <scope>SUBCELLULAR LOCATION</scope>
    <scope>TOPOLOGY</scope>
</reference>
<reference key="3">
    <citation type="journal article" date="2002" name="Proc. Natl. Acad. Sci. U.S.A.">
        <title>Phospholemman (FXYD1) associates with Na,K-ATPase and regulates its transport properties.</title>
        <authorList>
            <person name="Crambert G."/>
            <person name="Fuzesi M."/>
            <person name="Garty H."/>
            <person name="Karlish S."/>
            <person name="Geering K."/>
        </authorList>
    </citation>
    <scope>FUNCTION</scope>
</reference>
<reference key="4">
    <citation type="journal article" date="2006" name="J. Biol. Chem.">
        <title>Phospholemman phosphorylation alters its fluorescence resonance energy transfer with the Na/K-ATPase pump.</title>
        <authorList>
            <person name="Bossuyt J."/>
            <person name="Despa S."/>
            <person name="Martin J.L."/>
            <person name="Bers D.M."/>
        </authorList>
    </citation>
    <scope>INTERACTION WITH ATP1A1</scope>
    <scope>PHOSPHORYLATION AT SER-83 AND SER-88</scope>
</reference>
<reference key="5">
    <citation type="journal article" date="2009" name="Am. J. Physiol.">
        <title>FXYD1 phosphorylation in vitro and in adult rat cardiac myocytes: threonine 69 is a novel substrate for protein kinase C.</title>
        <authorList>
            <person name="Fuller W."/>
            <person name="Howie J."/>
            <person name="McLatchie L.M."/>
            <person name="Weber R.J."/>
            <person name="Hastie C.J."/>
            <person name="Burness K."/>
            <person name="Pavlovic D."/>
            <person name="Shattock M.J."/>
        </authorList>
    </citation>
    <scope>PHOSPHORYLATION AT SER-83; SER-88 AND THR-89</scope>
    <scope>MUTAGENESIS OF SER-83; SER-88 AND THR-89</scope>
</reference>
<reference key="6">
    <citation type="journal article" date="2010" name="Am. J. Physiol.">
        <title>Role of phospholemman phosphorylation sites in mediating kinase-dependent regulation of the Na+-K+-ATPase.</title>
        <authorList>
            <person name="Han F."/>
            <person name="Bossuyt J."/>
            <person name="Martin J.L."/>
            <person name="Despa S."/>
            <person name="Bers D.M."/>
        </authorList>
    </citation>
    <scope>PHOSPHORYLATION</scope>
    <scope>MUTAGENESIS OF SER-83 AND SER-88</scope>
</reference>
<reference key="7">
    <citation type="journal article" date="2011" name="J. Biol. Chem.">
        <title>Phosphomimetic mutations enhance oligomerization of phospholemman and modulate its interaction with the Na/K-ATPase.</title>
        <authorList>
            <person name="Song Q."/>
            <person name="Pallikkuth S."/>
            <person name="Bossuyt J."/>
            <person name="Bers D.M."/>
            <person name="Robia S.L."/>
        </authorList>
    </citation>
    <scope>PHOSPHORYLATION AT SER-83 AND SER-88</scope>
    <scope>MUTAGENESIS OF SER-83 AND SER-88</scope>
</reference>
<reference key="8">
    <citation type="journal article" date="2011" name="J. Biol. Chem.">
        <title>FXYD proteins reverse inhibition of the Na+-K+ pump mediated by glutathionylation of its beta1 subunit.</title>
        <authorList>
            <person name="Bibert S."/>
            <person name="Liu C.C."/>
            <person name="Figtree G.A."/>
            <person name="Garcia A."/>
            <person name="Hamilton E.J."/>
            <person name="Marassi F.M."/>
            <person name="Sweadner K.J."/>
            <person name="Cornelius F."/>
            <person name="Geering K."/>
            <person name="Rasmussen H.H."/>
        </authorList>
    </citation>
    <scope>FUNCTION</scope>
    <scope>INTERACTION WITH ATP1A1 AND ATP1B1</scope>
    <scope>GLUTATHIONYLATION AT CYS-62</scope>
    <scope>MUTAGENESIS OF CYS-60; CYS-62 AND LYS-63</scope>
</reference>
<name>PLM_CANLF</name>
<sequence length="92" mass="10500">MAPLHHILVLCVGFLTTATAEAPQEHDPFTYDYQSLRIGGLIIAGILFILGILIVLSRRCRCKFNQQQRTGEPDEEEGTFRSSIRRLSTRRR</sequence>
<comment type="function">
    <text evidence="2 4 7 13">Associates with and regulates the activity of the sodium/potassium-transporting ATPase (NKA) which transports Na(+) out of the cell and K(+) into the cell (PubMed:12169672). Inhibits NKA activity in its unphosphorylated state and stimulates activity when phosphorylated (By similarity). Reduces glutathionylation of the NKA beta-1 subunit ATP1B1, thus reversing glutathionylation-mediated inhibition of ATP1B1 (PubMed:21454534). Contributes to female sexual development by maintaining the excitability of neurons which secrete gonadotropin-releasing hormone (By similarity).</text>
</comment>
<comment type="subunit">
    <text evidence="1 2 3 4 8 13">Homotetramer (By similarity). Monomer (By similarity). Regulatory subunit of the sodium/potassium-transporting ATPase (NKA) which is composed of a catalytic alpha subunit, a non-catalytic beta subunit and an additional regulatory subunit (By similarity). The monomeric form associates with NKA while the oligomeric form does not (By similarity). Interacts with the catalytic alpha-1 subunit ATP1A1 (PubMed:16943195, PubMed:21454534). Also interacts with the catalytic alpha-2 and alpha-3 subunits ATP1A2 and ATP1A3 (By similarity). Very little interaction with the alpha subunits ATP1A1, ATP1A2 or ATP1A3 when phosphorylated at Ser-83 (By similarity). Interacts with non-catalytic beta-1 subunit ATP1B1 (PubMed:21454534). Oxidative stress decreases interaction with ATP1A1 but increases interaction with ATP1B1 (PubMed:21454534).</text>
</comment>
<comment type="subcellular location">
    <subcellularLocation>
        <location evidence="9 14">Cell membrane</location>
        <location evidence="9 14">Sarcolemma</location>
        <topology evidence="5">Single-pass type I membrane protein</topology>
    </subcellularLocation>
    <subcellularLocation>
        <location evidence="2">Apical cell membrane</location>
        <topology evidence="5">Single-pass type I membrane protein</topology>
    </subcellularLocation>
    <subcellularLocation>
        <location evidence="2">Membrane</location>
        <location evidence="2">Caveola</location>
    </subcellularLocation>
    <subcellularLocation>
        <location evidence="2">Cell membrane</location>
        <location evidence="2">Sarcolemma</location>
        <location evidence="2">T-tubule</location>
    </subcellularLocation>
    <text evidence="2">Detected in the apical cell membrane in brain. In myocytes, localizes to sarcolemma, t-tubules and intercalated disks.</text>
</comment>
<comment type="tissue specificity">
    <text evidence="9">Present in heart, esophagus, stomach, aorta, skeletal muscle, smooth muscle, and liver but absent from brain and kidney.</text>
</comment>
<comment type="domain">
    <text evidence="2">The cytoplasmic domain is sufficient to regulate sodium/potassium-transporting ATPase activity.</text>
</comment>
<comment type="PTM">
    <text evidence="1 2 9 11 12">Major plasma membrane substrate for cAMP-dependent protein kinase (PKA) and protein kinase C (PKC) in several different tissues (PubMed:1710217, PubMed:20861470). Phosphorylated in response to insulin and adrenergic stimulation (By similarity). Phosphorylation at Ser-88 stimulates sodium/potassium-transporting ATPase activity while the unphosphorylated form inhibits sodium/potassium-transporting ATPase activity (By similarity). Phosphorylation increases tetramerization, decreases binding to ATP1A1 and reduces inhibition of ATP1A1 activity (PubMed:21220422). Phosphorylation at Ser-83 leads to greatly reduced interaction with ATP1A1, ATP1A2 and ATP1A3 (By similarity). May be phosphorylated by DMPK (By similarity).</text>
</comment>
<comment type="PTM">
    <text evidence="1">Palmitoylation increases half-life and stability and is enhanced upon phosphorylation at Ser-88 by PKA.</text>
</comment>
<comment type="similarity">
    <text evidence="16">Belongs to the FXYD family.</text>
</comment>
<accession>P56513</accession>